<name>KN12A_ARATH</name>
<organism>
    <name type="scientific">Arabidopsis thaliana</name>
    <name type="common">Mouse-ear cress</name>
    <dbReference type="NCBI Taxonomy" id="3702"/>
    <lineage>
        <taxon>Eukaryota</taxon>
        <taxon>Viridiplantae</taxon>
        <taxon>Streptophyta</taxon>
        <taxon>Embryophyta</taxon>
        <taxon>Tracheophyta</taxon>
        <taxon>Spermatophyta</taxon>
        <taxon>Magnoliopsida</taxon>
        <taxon>eudicotyledons</taxon>
        <taxon>Gunneridae</taxon>
        <taxon>Pentapetalae</taxon>
        <taxon>rosids</taxon>
        <taxon>malvids</taxon>
        <taxon>Brassicales</taxon>
        <taxon>Brassicaceae</taxon>
        <taxon>Camelineae</taxon>
        <taxon>Arabidopsis</taxon>
    </lineage>
</organism>
<proteinExistence type="evidence at protein level"/>
<feature type="chain" id="PRO_0000419695" description="Kinesin-like protein KIN-12A">
    <location>
        <begin position="1"/>
        <end position="1292"/>
    </location>
</feature>
<feature type="domain" description="Kinesin motor" evidence="2">
    <location>
        <begin position="91"/>
        <end position="426"/>
    </location>
</feature>
<feature type="region of interest" description="Disordered" evidence="3">
    <location>
        <begin position="1"/>
        <end position="86"/>
    </location>
</feature>
<feature type="region of interest" description="Microtubules-binding" evidence="11">
    <location>
        <begin position="293"/>
        <end position="297"/>
    </location>
</feature>
<feature type="region of interest" description="Microtubules-binding" evidence="11">
    <location>
        <begin position="326"/>
        <end position="332"/>
    </location>
</feature>
<feature type="region of interest" description="Microtubules-binding" evidence="11">
    <location>
        <begin position="375"/>
        <end position="379"/>
    </location>
</feature>
<feature type="region of interest" description="Neck" evidence="11">
    <location>
        <begin position="424"/>
        <end position="461"/>
    </location>
</feature>
<feature type="region of interest" description="Disordered" evidence="3">
    <location>
        <begin position="677"/>
        <end position="724"/>
    </location>
</feature>
<feature type="coiled-coil region" evidence="1">
    <location>
        <begin position="945"/>
        <end position="992"/>
    </location>
</feature>
<feature type="coiled-coil region" evidence="1">
    <location>
        <begin position="1047"/>
        <end position="1232"/>
    </location>
</feature>
<feature type="compositionally biased region" description="Low complexity" evidence="3">
    <location>
        <begin position="19"/>
        <end position="29"/>
    </location>
</feature>
<feature type="compositionally biased region" description="Pro residues" evidence="3">
    <location>
        <begin position="62"/>
        <end position="71"/>
    </location>
</feature>
<feature type="binding site" evidence="2">
    <location>
        <begin position="165"/>
        <end position="172"/>
    </location>
    <ligand>
        <name>ATP</name>
        <dbReference type="ChEBI" id="CHEBI:30616"/>
    </ligand>
</feature>
<evidence type="ECO:0000255" key="1"/>
<evidence type="ECO:0000255" key="2">
    <source>
        <dbReference type="PROSITE-ProRule" id="PRU00283"/>
    </source>
</evidence>
<evidence type="ECO:0000256" key="3">
    <source>
        <dbReference type="SAM" id="MobiDB-lite"/>
    </source>
</evidence>
<evidence type="ECO:0000269" key="4">
    <source>
    </source>
</evidence>
<evidence type="ECO:0000269" key="5">
    <source>
    </source>
</evidence>
<evidence type="ECO:0000269" key="6">
    <source>
    </source>
</evidence>
<evidence type="ECO:0000269" key="7">
    <source>
    </source>
</evidence>
<evidence type="ECO:0000303" key="8">
    <source>
    </source>
</evidence>
<evidence type="ECO:0000303" key="9">
    <source>
    </source>
</evidence>
<evidence type="ECO:0000305" key="10"/>
<evidence type="ECO:0000305" key="11">
    <source>
    </source>
</evidence>
<evidence type="ECO:0000312" key="12">
    <source>
        <dbReference type="Araport" id="AT4G14150"/>
    </source>
</evidence>
<evidence type="ECO:0000312" key="13">
    <source>
        <dbReference type="EMBL" id="AAF78893.1"/>
    </source>
</evidence>
<evidence type="ECO:0000312" key="14">
    <source>
        <dbReference type="EMBL" id="CAB10194.1"/>
    </source>
</evidence>
<evidence type="ECO:0000312" key="15">
    <source>
        <dbReference type="EMBL" id="CAB78457.1"/>
    </source>
</evidence>
<keyword id="KW-0067">ATP-binding</keyword>
<keyword id="KW-0175">Coiled coil</keyword>
<keyword id="KW-0963">Cytoplasm</keyword>
<keyword id="KW-0206">Cytoskeleton</keyword>
<keyword id="KW-0493">Microtubule</keyword>
<keyword id="KW-0505">Motor protein</keyword>
<keyword id="KW-0547">Nucleotide-binding</keyword>
<keyword id="KW-1185">Reference proteome</keyword>
<accession>Q9LDN0</accession>
<accession>O23274</accession>
<comment type="function">
    <text evidence="4 6">Plus-end directed kinesin-like motor enzyme that plays a critical role in the organization of phragmoplast microtubules during cytokinesis. Constitutes a signaling module in association with serine/threonine-protein kinase TIO that is required to support phragmoplast expansion and cell-plate growth in plant cells. Binds microtubules in an ATP-sensitive manner.</text>
</comment>
<comment type="subunit">
    <text evidence="5 7">Homodimer and heterodimer with KIN12B. Interacts with TIO.</text>
</comment>
<comment type="interaction">
    <interactant intactId="EBI-6280428">
        <id>Q9LDN0</id>
    </interactant>
    <interactant intactId="EBI-6280461">
        <id>Q8L7Y8</id>
        <label>KIN12B</label>
    </interactant>
    <organismsDiffer>false</organismsDiffer>
    <experiments>2</experiments>
</comment>
<comment type="interaction">
    <interactant intactId="EBI-6280428">
        <id>Q9LDN0</id>
    </interactant>
    <interactant intactId="EBI-6280536">
        <id>Q2QAV0</id>
        <label>TIO</label>
    </interactant>
    <organismsDiffer>false</organismsDiffer>
    <experiments>3</experiments>
</comment>
<comment type="subcellular location">
    <subcellularLocation>
        <location evidence="4 5">Cytoplasm</location>
        <location evidence="4 5">Cytoskeleton</location>
        <location evidence="4 5">Phragmoplast</location>
    </subcellularLocation>
    <text>Localized to the midline of the nascent phragmoplast (late anaphase) and remains associated with the expanding phragmoplast ring.</text>
</comment>
<comment type="disruption phenotype">
    <text evidence="5 6">No visible phenotype. Kin12a and kin12b double mutant display defective pollen grains leading to the production of fewer seeds.</text>
</comment>
<comment type="similarity">
    <text evidence="9">Belongs to the TRAFAC class myosin-kinesin ATPase superfamily. Kinesin family. KIN-12 subfamily.</text>
</comment>
<comment type="sequence caution" evidence="10">
    <conflict type="erroneous gene model prediction">
        <sequence resource="EMBL-CDS" id="CAB10194"/>
    </conflict>
    <text>The predicted gene has been split into 3 genes: At4g14145, At4g14147 and At4g14150.</text>
</comment>
<comment type="sequence caution" evidence="10">
    <conflict type="erroneous gene model prediction">
        <sequence resource="EMBL-CDS" id="CAB78457"/>
    </conflict>
    <text>The predicted gene has been split into 3 genes: At4g14145, At4g14147 and At4g14150.</text>
</comment>
<dbReference type="EMBL" id="AF193767">
    <property type="protein sequence ID" value="AAF78893.1"/>
    <property type="molecule type" value="mRNA"/>
</dbReference>
<dbReference type="EMBL" id="AF193768">
    <property type="protein sequence ID" value="AAF78894.1"/>
    <property type="molecule type" value="Genomic_DNA"/>
</dbReference>
<dbReference type="EMBL" id="Z97335">
    <property type="protein sequence ID" value="CAB10194.1"/>
    <property type="status" value="ALT_SEQ"/>
    <property type="molecule type" value="Genomic_DNA"/>
</dbReference>
<dbReference type="EMBL" id="AL161538">
    <property type="protein sequence ID" value="CAB78457.1"/>
    <property type="status" value="ALT_SEQ"/>
    <property type="molecule type" value="Genomic_DNA"/>
</dbReference>
<dbReference type="EMBL" id="CP002687">
    <property type="protein sequence ID" value="AEE83384.1"/>
    <property type="molecule type" value="Genomic_DNA"/>
</dbReference>
<dbReference type="PIR" id="H71402">
    <property type="entry name" value="H71402"/>
</dbReference>
<dbReference type="RefSeq" id="NP_567423.1">
    <property type="nucleotide sequence ID" value="NM_117492.2"/>
</dbReference>
<dbReference type="SMR" id="Q9LDN0"/>
<dbReference type="BioGRID" id="12351">
    <property type="interactions" value="1"/>
</dbReference>
<dbReference type="FunCoup" id="Q9LDN0">
    <property type="interactions" value="322"/>
</dbReference>
<dbReference type="IntAct" id="Q9LDN0">
    <property type="interactions" value="2"/>
</dbReference>
<dbReference type="STRING" id="3702.Q9LDN0"/>
<dbReference type="GlyGen" id="Q9LDN0">
    <property type="glycosylation" value="1 site"/>
</dbReference>
<dbReference type="iPTMnet" id="Q9LDN0"/>
<dbReference type="PaxDb" id="3702-AT4G14150.1"/>
<dbReference type="ProteomicsDB" id="250760"/>
<dbReference type="EnsemblPlants" id="AT4G14150.1">
    <property type="protein sequence ID" value="AT4G14150.1"/>
    <property type="gene ID" value="AT4G14150"/>
</dbReference>
<dbReference type="GeneID" id="827054"/>
<dbReference type="Gramene" id="AT4G14150.1">
    <property type="protein sequence ID" value="AT4G14150.1"/>
    <property type="gene ID" value="AT4G14150"/>
</dbReference>
<dbReference type="KEGG" id="ath:AT4G14150"/>
<dbReference type="Araport" id="AT4G14150"/>
<dbReference type="TAIR" id="AT4G14150">
    <property type="gene designation" value="PAKRP1"/>
</dbReference>
<dbReference type="eggNOG" id="KOG4280">
    <property type="taxonomic scope" value="Eukaryota"/>
</dbReference>
<dbReference type="HOGENOM" id="CLU_009194_0_0_1"/>
<dbReference type="InParanoid" id="Q9LDN0"/>
<dbReference type="OMA" id="IRLESYM"/>
<dbReference type="PhylomeDB" id="Q9LDN0"/>
<dbReference type="CD-CODE" id="33FCD62D">
    <property type="entry name" value="Centrosome"/>
</dbReference>
<dbReference type="PRO" id="PR:Q9LDN0"/>
<dbReference type="Proteomes" id="UP000006548">
    <property type="component" value="Chromosome 4"/>
</dbReference>
<dbReference type="ExpressionAtlas" id="Q9LDN0">
    <property type="expression patterns" value="baseline and differential"/>
</dbReference>
<dbReference type="GO" id="GO:0009507">
    <property type="term" value="C:chloroplast"/>
    <property type="evidence" value="ECO:0007005"/>
    <property type="project" value="TAIR"/>
</dbReference>
<dbReference type="GO" id="GO:0005874">
    <property type="term" value="C:microtubule"/>
    <property type="evidence" value="ECO:0007669"/>
    <property type="project" value="UniProtKB-KW"/>
</dbReference>
<dbReference type="GO" id="GO:0009524">
    <property type="term" value="C:phragmoplast"/>
    <property type="evidence" value="ECO:0000314"/>
    <property type="project" value="UniProtKB"/>
</dbReference>
<dbReference type="GO" id="GO:0005524">
    <property type="term" value="F:ATP binding"/>
    <property type="evidence" value="ECO:0007669"/>
    <property type="project" value="UniProtKB-KW"/>
</dbReference>
<dbReference type="GO" id="GO:0008017">
    <property type="term" value="F:microtubule binding"/>
    <property type="evidence" value="ECO:0007669"/>
    <property type="project" value="InterPro"/>
</dbReference>
<dbReference type="GO" id="GO:0003777">
    <property type="term" value="F:microtubule motor activity"/>
    <property type="evidence" value="ECO:0007669"/>
    <property type="project" value="InterPro"/>
</dbReference>
<dbReference type="GO" id="GO:0007112">
    <property type="term" value="P:male meiosis cytokinesis"/>
    <property type="evidence" value="ECO:0000316"/>
    <property type="project" value="TAIR"/>
</dbReference>
<dbReference type="GO" id="GO:0055046">
    <property type="term" value="P:microgametogenesis"/>
    <property type="evidence" value="ECO:0000315"/>
    <property type="project" value="TAIR"/>
</dbReference>
<dbReference type="GO" id="GO:0007018">
    <property type="term" value="P:microtubule-based movement"/>
    <property type="evidence" value="ECO:0007669"/>
    <property type="project" value="InterPro"/>
</dbReference>
<dbReference type="GO" id="GO:0080175">
    <property type="term" value="P:phragmoplast microtubule organization"/>
    <property type="evidence" value="ECO:0000315"/>
    <property type="project" value="UniProtKB"/>
</dbReference>
<dbReference type="FunFam" id="3.40.850.10:FF:000052">
    <property type="entry name" value="Kinesin-like protein KIN-12F"/>
    <property type="match status" value="1"/>
</dbReference>
<dbReference type="Gene3D" id="3.40.850.10">
    <property type="entry name" value="Kinesin motor domain"/>
    <property type="match status" value="1"/>
</dbReference>
<dbReference type="InterPro" id="IPR044986">
    <property type="entry name" value="KIF15/KIN-12"/>
</dbReference>
<dbReference type="InterPro" id="IPR019821">
    <property type="entry name" value="Kinesin_motor_CS"/>
</dbReference>
<dbReference type="InterPro" id="IPR001752">
    <property type="entry name" value="Kinesin_motor_dom"/>
</dbReference>
<dbReference type="InterPro" id="IPR036961">
    <property type="entry name" value="Kinesin_motor_dom_sf"/>
</dbReference>
<dbReference type="InterPro" id="IPR027417">
    <property type="entry name" value="P-loop_NTPase"/>
</dbReference>
<dbReference type="PANTHER" id="PTHR37739:SF16">
    <property type="entry name" value="KINESIN-LIKE PROTEIN"/>
    <property type="match status" value="1"/>
</dbReference>
<dbReference type="PANTHER" id="PTHR37739">
    <property type="entry name" value="KINESIN-LIKE PROTEIN KIN-12D"/>
    <property type="match status" value="1"/>
</dbReference>
<dbReference type="Pfam" id="PF00225">
    <property type="entry name" value="Kinesin"/>
    <property type="match status" value="1"/>
</dbReference>
<dbReference type="PRINTS" id="PR00380">
    <property type="entry name" value="KINESINHEAVY"/>
</dbReference>
<dbReference type="SMART" id="SM00129">
    <property type="entry name" value="KISc"/>
    <property type="match status" value="1"/>
</dbReference>
<dbReference type="SUPFAM" id="SSF52540">
    <property type="entry name" value="P-loop containing nucleoside triphosphate hydrolases"/>
    <property type="match status" value="1"/>
</dbReference>
<dbReference type="PROSITE" id="PS00411">
    <property type="entry name" value="KINESIN_MOTOR_1"/>
    <property type="match status" value="1"/>
</dbReference>
<dbReference type="PROSITE" id="PS50067">
    <property type="entry name" value="KINESIN_MOTOR_2"/>
    <property type="match status" value="1"/>
</dbReference>
<reference key="1">
    <citation type="journal article" date="2000" name="Curr. Biol.">
        <title>Identification of a phragmoplast-associated kinesin-related protein in higher plants.</title>
        <authorList>
            <person name="Lee Y.R.J."/>
            <person name="Liu B."/>
        </authorList>
    </citation>
    <scope>NUCLEOTIDE SEQUENCE [GENOMIC DNA / MRNA]</scope>
    <scope>SUBCELLULAR LOCATION</scope>
    <scope>FUNCTION</scope>
    <source>
        <strain>cv. Columbia</strain>
    </source>
</reference>
<reference key="2">
    <citation type="journal article" date="1998" name="Nature">
        <title>Analysis of 1.9 Mb of contiguous sequence from chromosome 4 of Arabidopsis thaliana.</title>
        <authorList>
            <person name="Bevan M."/>
            <person name="Bancroft I."/>
            <person name="Bent E."/>
            <person name="Love K."/>
            <person name="Goodman H.M."/>
            <person name="Dean C."/>
            <person name="Bergkamp R."/>
            <person name="Dirkse W."/>
            <person name="van Staveren M."/>
            <person name="Stiekema W."/>
            <person name="Drost L."/>
            <person name="Ridley P."/>
            <person name="Hudson S.-A."/>
            <person name="Patel K."/>
            <person name="Murphy G."/>
            <person name="Piffanelli P."/>
            <person name="Wedler H."/>
            <person name="Wedler E."/>
            <person name="Wambutt R."/>
            <person name="Weitzenegger T."/>
            <person name="Pohl T."/>
            <person name="Terryn N."/>
            <person name="Gielen J."/>
            <person name="Villarroel R."/>
            <person name="De Clercq R."/>
            <person name="van Montagu M."/>
            <person name="Lecharny A."/>
            <person name="Aubourg S."/>
            <person name="Gy I."/>
            <person name="Kreis M."/>
            <person name="Lao N."/>
            <person name="Kavanagh T."/>
            <person name="Hempel S."/>
            <person name="Kotter P."/>
            <person name="Entian K.-D."/>
            <person name="Rieger M."/>
            <person name="Schaefer M."/>
            <person name="Funk B."/>
            <person name="Mueller-Auer S."/>
            <person name="Silvey M."/>
            <person name="James R."/>
            <person name="Monfort A."/>
            <person name="Pons A."/>
            <person name="Puigdomenech P."/>
            <person name="Douka A."/>
            <person name="Voukelatou E."/>
            <person name="Milioni D."/>
            <person name="Hatzopoulos P."/>
            <person name="Piravandi E."/>
            <person name="Obermaier B."/>
            <person name="Hilbert H."/>
            <person name="Duesterhoeft A."/>
            <person name="Moores T."/>
            <person name="Jones J.D.G."/>
            <person name="Eneva T."/>
            <person name="Palme K."/>
            <person name="Benes V."/>
            <person name="Rechmann S."/>
            <person name="Ansorge W."/>
            <person name="Cooke R."/>
            <person name="Berger C."/>
            <person name="Delseny M."/>
            <person name="Voet M."/>
            <person name="Volckaert G."/>
            <person name="Mewes H.-W."/>
            <person name="Klosterman S."/>
            <person name="Schueller C."/>
            <person name="Chalwatzis N."/>
        </authorList>
    </citation>
    <scope>NUCLEOTIDE SEQUENCE [LARGE SCALE GENOMIC DNA]</scope>
    <source>
        <strain>cv. Columbia</strain>
    </source>
</reference>
<reference key="3">
    <citation type="journal article" date="1999" name="Nature">
        <title>Sequence and analysis of chromosome 4 of the plant Arabidopsis thaliana.</title>
        <authorList>
            <person name="Mayer K.F.X."/>
            <person name="Schueller C."/>
            <person name="Wambutt R."/>
            <person name="Murphy G."/>
            <person name="Volckaert G."/>
            <person name="Pohl T."/>
            <person name="Duesterhoeft A."/>
            <person name="Stiekema W."/>
            <person name="Entian K.-D."/>
            <person name="Terryn N."/>
            <person name="Harris B."/>
            <person name="Ansorge W."/>
            <person name="Brandt P."/>
            <person name="Grivell L.A."/>
            <person name="Rieger M."/>
            <person name="Weichselgartner M."/>
            <person name="de Simone V."/>
            <person name="Obermaier B."/>
            <person name="Mache R."/>
            <person name="Mueller M."/>
            <person name="Kreis M."/>
            <person name="Delseny M."/>
            <person name="Puigdomenech P."/>
            <person name="Watson M."/>
            <person name="Schmidtheini T."/>
            <person name="Reichert B."/>
            <person name="Portetelle D."/>
            <person name="Perez-Alonso M."/>
            <person name="Boutry M."/>
            <person name="Bancroft I."/>
            <person name="Vos P."/>
            <person name="Hoheisel J."/>
            <person name="Zimmermann W."/>
            <person name="Wedler H."/>
            <person name="Ridley P."/>
            <person name="Langham S.-A."/>
            <person name="McCullagh B."/>
            <person name="Bilham L."/>
            <person name="Robben J."/>
            <person name="van der Schueren J."/>
            <person name="Grymonprez B."/>
            <person name="Chuang Y.-J."/>
            <person name="Vandenbussche F."/>
            <person name="Braeken M."/>
            <person name="Weltjens I."/>
            <person name="Voet M."/>
            <person name="Bastiaens I."/>
            <person name="Aert R."/>
            <person name="Defoor E."/>
            <person name="Weitzenegger T."/>
            <person name="Bothe G."/>
            <person name="Ramsperger U."/>
            <person name="Hilbert H."/>
            <person name="Braun M."/>
            <person name="Holzer E."/>
            <person name="Brandt A."/>
            <person name="Peters S."/>
            <person name="van Staveren M."/>
            <person name="Dirkse W."/>
            <person name="Mooijman P."/>
            <person name="Klein Lankhorst R."/>
            <person name="Rose M."/>
            <person name="Hauf J."/>
            <person name="Koetter P."/>
            <person name="Berneiser S."/>
            <person name="Hempel S."/>
            <person name="Feldpausch M."/>
            <person name="Lamberth S."/>
            <person name="Van den Daele H."/>
            <person name="De Keyser A."/>
            <person name="Buysshaert C."/>
            <person name="Gielen J."/>
            <person name="Villarroel R."/>
            <person name="De Clercq R."/>
            <person name="van Montagu M."/>
            <person name="Rogers J."/>
            <person name="Cronin A."/>
            <person name="Quail M.A."/>
            <person name="Bray-Allen S."/>
            <person name="Clark L."/>
            <person name="Doggett J."/>
            <person name="Hall S."/>
            <person name="Kay M."/>
            <person name="Lennard N."/>
            <person name="McLay K."/>
            <person name="Mayes R."/>
            <person name="Pettett A."/>
            <person name="Rajandream M.A."/>
            <person name="Lyne M."/>
            <person name="Benes V."/>
            <person name="Rechmann S."/>
            <person name="Borkova D."/>
            <person name="Bloecker H."/>
            <person name="Scharfe M."/>
            <person name="Grimm M."/>
            <person name="Loehnert T.-H."/>
            <person name="Dose S."/>
            <person name="de Haan M."/>
            <person name="Maarse A.C."/>
            <person name="Schaefer M."/>
            <person name="Mueller-Auer S."/>
            <person name="Gabel C."/>
            <person name="Fuchs M."/>
            <person name="Fartmann B."/>
            <person name="Granderath K."/>
            <person name="Dauner D."/>
            <person name="Herzl A."/>
            <person name="Neumann S."/>
            <person name="Argiriou A."/>
            <person name="Vitale D."/>
            <person name="Liguori R."/>
            <person name="Piravandi E."/>
            <person name="Massenet O."/>
            <person name="Quigley F."/>
            <person name="Clabauld G."/>
            <person name="Muendlein A."/>
            <person name="Felber R."/>
            <person name="Schnabl S."/>
            <person name="Hiller R."/>
            <person name="Schmidt W."/>
            <person name="Lecharny A."/>
            <person name="Aubourg S."/>
            <person name="Chefdor F."/>
            <person name="Cooke R."/>
            <person name="Berger C."/>
            <person name="Monfort A."/>
            <person name="Casacuberta E."/>
            <person name="Gibbons T."/>
            <person name="Weber N."/>
            <person name="Vandenbol M."/>
            <person name="Bargues M."/>
            <person name="Terol J."/>
            <person name="Torres A."/>
            <person name="Perez-Perez A."/>
            <person name="Purnelle B."/>
            <person name="Bent E."/>
            <person name="Johnson S."/>
            <person name="Tacon D."/>
            <person name="Jesse T."/>
            <person name="Heijnen L."/>
            <person name="Schwarz S."/>
            <person name="Scholler P."/>
            <person name="Heber S."/>
            <person name="Francs P."/>
            <person name="Bielke C."/>
            <person name="Frishman D."/>
            <person name="Haase D."/>
            <person name="Lemcke K."/>
            <person name="Mewes H.-W."/>
            <person name="Stocker S."/>
            <person name="Zaccaria P."/>
            <person name="Bevan M."/>
            <person name="Wilson R.K."/>
            <person name="de la Bastide M."/>
            <person name="Habermann K."/>
            <person name="Parnell L."/>
            <person name="Dedhia N."/>
            <person name="Gnoj L."/>
            <person name="Schutz K."/>
            <person name="Huang E."/>
            <person name="Spiegel L."/>
            <person name="Sekhon M."/>
            <person name="Murray J."/>
            <person name="Sheet P."/>
            <person name="Cordes M."/>
            <person name="Abu-Threideh J."/>
            <person name="Stoneking T."/>
            <person name="Kalicki J."/>
            <person name="Graves T."/>
            <person name="Harmon G."/>
            <person name="Edwards J."/>
            <person name="Latreille P."/>
            <person name="Courtney L."/>
            <person name="Cloud J."/>
            <person name="Abbott A."/>
            <person name="Scott K."/>
            <person name="Johnson D."/>
            <person name="Minx P."/>
            <person name="Bentley D."/>
            <person name="Fulton B."/>
            <person name="Miller N."/>
            <person name="Greco T."/>
            <person name="Kemp K."/>
            <person name="Kramer J."/>
            <person name="Fulton L."/>
            <person name="Mardis E."/>
            <person name="Dante M."/>
            <person name="Pepin K."/>
            <person name="Hillier L.W."/>
            <person name="Nelson J."/>
            <person name="Spieth J."/>
            <person name="Ryan E."/>
            <person name="Andrews S."/>
            <person name="Geisel C."/>
            <person name="Layman D."/>
            <person name="Du H."/>
            <person name="Ali J."/>
            <person name="Berghoff A."/>
            <person name="Jones K."/>
            <person name="Drone K."/>
            <person name="Cotton M."/>
            <person name="Joshu C."/>
            <person name="Antonoiu B."/>
            <person name="Zidanic M."/>
            <person name="Strong C."/>
            <person name="Sun H."/>
            <person name="Lamar B."/>
            <person name="Yordan C."/>
            <person name="Ma P."/>
            <person name="Zhong J."/>
            <person name="Preston R."/>
            <person name="Vil D."/>
            <person name="Shekher M."/>
            <person name="Matero A."/>
            <person name="Shah R."/>
            <person name="Swaby I.K."/>
            <person name="O'Shaughnessy A."/>
            <person name="Rodriguez M."/>
            <person name="Hoffman J."/>
            <person name="Till S."/>
            <person name="Granat S."/>
            <person name="Shohdy N."/>
            <person name="Hasegawa A."/>
            <person name="Hameed A."/>
            <person name="Lodhi M."/>
            <person name="Johnson A."/>
            <person name="Chen E."/>
            <person name="Marra M.A."/>
            <person name="Martienssen R."/>
            <person name="McCombie W.R."/>
        </authorList>
    </citation>
    <scope>NUCLEOTIDE SEQUENCE [LARGE SCALE GENOMIC DNA]</scope>
    <source>
        <strain>cv. Columbia</strain>
    </source>
</reference>
<reference key="4">
    <citation type="journal article" date="2017" name="Plant J.">
        <title>Araport11: a complete reannotation of the Arabidopsis thaliana reference genome.</title>
        <authorList>
            <person name="Cheng C.Y."/>
            <person name="Krishnakumar V."/>
            <person name="Chan A.P."/>
            <person name="Thibaud-Nissen F."/>
            <person name="Schobel S."/>
            <person name="Town C.D."/>
        </authorList>
    </citation>
    <scope>GENOME REANNOTATION</scope>
    <source>
        <strain>cv. Columbia</strain>
    </source>
</reference>
<reference key="5">
    <citation type="journal article" date="2001" name="BMC Genomics">
        <title>Kinesins in the Arabidopsis genome: a comparative analysis among eukaryotes.</title>
        <authorList>
            <person name="Reddy A.S."/>
            <person name="Day I.S."/>
        </authorList>
    </citation>
    <scope>GENE FAMILY</scope>
</reference>
<reference key="6">
    <citation type="journal article" date="2004" name="Planta">
        <title>Localization of two homologous Arabidopsis kinesin-related proteins in the phragmoplast.</title>
        <authorList>
            <person name="Pan R."/>
            <person name="Lee Y.R."/>
            <person name="Liu B."/>
        </authorList>
    </citation>
    <scope>SUBCELLULAR LOCATION</scope>
    <scope>SUBUNIT</scope>
    <scope>DISRUPTION PHENOTYPE</scope>
</reference>
<reference key="7">
    <citation type="journal article" date="2006" name="BMC Genomics">
        <title>Comprehensive comparative analysis of kinesins in photosynthetic eukaryotes.</title>
        <authorList>
            <person name="Richardson D.N."/>
            <person name="Simmons M.P."/>
            <person name="Reddy A.S."/>
        </authorList>
    </citation>
    <scope>GENE FAMILY</scope>
    <scope>NOMENCLATURE</scope>
</reference>
<reference key="8">
    <citation type="journal article" date="2007" name="Plant Cell">
        <title>Two Arabidopsis phragmoplast-associated kinesins play a critical role in cytokinesis during male gametogenesis.</title>
        <authorList>
            <person name="Lee Y.R."/>
            <person name="Li Y."/>
            <person name="Liu B."/>
        </authorList>
    </citation>
    <scope>FUNCTION</scope>
    <scope>DISRUPTION PHENOTYPE</scope>
</reference>
<reference key="9">
    <citation type="journal article" date="2012" name="Plant J.">
        <title>Arabidopsis Fused kinase and the Kinesin-12 subfamily constitute a signalling module required for phragmoplast expansion.</title>
        <authorList>
            <person name="Oh S.A."/>
            <person name="Allen T."/>
            <person name="Kim G.J."/>
            <person name="Sidorova A."/>
            <person name="Borg M."/>
            <person name="Park S.K."/>
            <person name="Twell D."/>
        </authorList>
    </citation>
    <scope>INTERACTION WITH TIO</scope>
</reference>
<reference key="10">
    <citation type="journal article" date="2012" name="Protoplasma">
        <title>Functions of the Arabidopsis kinesin superfamily of microtubule-based motor proteins.</title>
        <authorList>
            <person name="Zhu C."/>
            <person name="Dixit R."/>
        </authorList>
    </citation>
    <scope>REVIEW</scope>
</reference>
<protein>
    <recommendedName>
        <fullName evidence="10">Kinesin-like protein KIN-12A</fullName>
    </recommendedName>
    <alternativeName>
        <fullName evidence="8">Phragmoplast-associated kinesin-related protein 1</fullName>
        <shortName evidence="8">AtPAKRP1</shortName>
    </alternativeName>
</protein>
<sequence length="1292" mass="144632">MKKHFTLPRNAILRDGGEPHSPNPSISKSKPPRKLRSAKENAPPLDRNTSTPDHRSMRMKNPLPPRPPPSNPLKRKLSAETATESGFSDSGVKVIVRMKPLNKGEEGDMIVEKMSKDSLTVSGQTFTFDSIANPESTQEQMFQLVGAPLVENCLSGFNSSVFAYGQTGSGKTYTMWGPANGLLEEHLCGDQRGLTPRVFERLFARIKEEQVKHAERQLNYQCRCSLLEIYNEQITDLLDPSQKNLMIREDVKSGVYVENLTEEYVKNLTDVSQLLIKGLGNRRTGATSVNTESSRSHCVFTCVVESRCKNVADGLSSFKTSRINLVDLAGSERQKSTGAAGERLKEAGNINRSLSQLGNLINILAEISQTGKPRHIPYRDSRLTFLLQESLGGNAKLAMVCAVSPSQSCRSETFSTLRFAQRAKAIQNKAVVNEVMQDDVNFLRGVIHQLRDELQRMKNDGNNPTNPNVAYSTAWNARRSLNLLRSFGLGHPRSLPHEDNDGDIEMEIDEAAVERLCVQVGLQSSLASEGINHDMNRVKSIHSSDGQSIEKRLPEDSDVAMEDACCHTENHEPETVDNMRTETETGIRENQIKTHSQTLDHESSFQPLSVKDALCSSLNKSEDVSSCPDLVPQDVTSANVLIADGVDDPEHLVNSASPSLCIDPVGATPVLKSPTLSVSPTIRNSRKSLKTSELSTASQKDSEGENLVTEAADPSPATSKKMNNCSSALSTQKSKVFPVRTERLASSLHKGIKLLESYCQSTAQRRSTYRFSFKAPDSEPSTSISKADAGVQTIPGADAISEENTKEFLCCKCKCREQFDAQQMGDMPNLQLVPVDNSEVAEKSKNQVPKAVEKVLAGSIRREMALEEFCTKQASEITQLNRLVQQYKHERECNAIIGQTREDKIIRLESLMDGVLSKEDFLDEEFASLLHEHKLLKDMYQNHPEVLKTKIELERTQEEVENFKNFYGDMGEREVLLEEIQDLKLQLQCYIDPSLKSALKTCTLLKLSYQAPPVNAIPESQDESLEKTLEQERLCWTEAETKWISLSEELRTELEASKALINKQKHELEIEKRCGEELKEAMQMAMEGHARMLEQYADLEEKHMQLLARHRRIQDGIDDVKKAAARAGVRGAESRFINALAAEISALKVEKEKERQYLRDENKSLQTQLRDTAEAIQAAGELLVRLKEAEEGLTVAQKRAMDAEYEAAEAYRQIDKLKKKHENEINTLNQLVPQSHIHNECSTKCDQAVEPSVNASSEQQWRDEFEPLYKKETEFSNLAEPSWFSGYDRCNI</sequence>
<gene>
    <name evidence="10" type="primary">KIN12A</name>
    <name evidence="13" type="synonym">PAKRP1</name>
    <name evidence="12" type="ordered locus">At4g14150</name>
    <name evidence="14" type="ORF">dl3115c</name>
    <name evidence="15" type="ORF">FCAALL.159</name>
</gene>